<feature type="chain" id="PRO_0000247834" description="GPN-loop GTPase 2">
    <location>
        <begin position="1"/>
        <end position="303"/>
    </location>
</feature>
<feature type="short sequence motif" description="Gly-Pro-Asn (GPN)-loop; involved in dimer interface" evidence="3">
    <location>
        <begin position="85"/>
        <end position="87"/>
    </location>
</feature>
<feature type="binding site" evidence="3">
    <location>
        <begin position="29"/>
        <end position="34"/>
    </location>
    <ligand>
        <name>GTP</name>
        <dbReference type="ChEBI" id="CHEBI:37565"/>
    </ligand>
</feature>
<feature type="binding site" evidence="3">
    <location>
        <begin position="187"/>
        <end position="190"/>
    </location>
    <ligand>
        <name>GTP</name>
        <dbReference type="ChEBI" id="CHEBI:37565"/>
    </ligand>
</feature>
<feature type="site" description="Stabilizes the phosphate intermediate; shared with dimeric partner" evidence="3">
    <location>
        <position position="87"/>
    </location>
</feature>
<sequence length="303" mass="33754">MADTDCKWDPGADKYPLLGFGQAVIGPPGSGKSTYVRAMQALLAQMGRKSAIINLDPAGEDEPGAAVSLRELLGLEEVMSELRLGPNGALLYCMEYLQENLDWLRGRLQGLRGTYFLLDCPGQVELYTHHPALPDVLRRLGAWGLRLCAVHLVDSHYCTDPAKFISVLCTSLSTMLHVELPHINVLSKMDLIEQYGRLAFNLDYYTEVMDLSYLVEQLTSDPFFRRHKRLHEKLAEVIQDYGLVTFMPLSIKDEKSLRLVLSAVDKASGFCFGETKQSLGNLMSVAVGADFQFTSYPSHDCRG</sequence>
<proteinExistence type="evidence at transcript level"/>
<organism>
    <name type="scientific">Xenopus tropicalis</name>
    <name type="common">Western clawed frog</name>
    <name type="synonym">Silurana tropicalis</name>
    <dbReference type="NCBI Taxonomy" id="8364"/>
    <lineage>
        <taxon>Eukaryota</taxon>
        <taxon>Metazoa</taxon>
        <taxon>Chordata</taxon>
        <taxon>Craniata</taxon>
        <taxon>Vertebrata</taxon>
        <taxon>Euteleostomi</taxon>
        <taxon>Amphibia</taxon>
        <taxon>Batrachia</taxon>
        <taxon>Anura</taxon>
        <taxon>Pipoidea</taxon>
        <taxon>Pipidae</taxon>
        <taxon>Xenopodinae</taxon>
        <taxon>Xenopus</taxon>
        <taxon>Silurana</taxon>
    </lineage>
</organism>
<gene>
    <name evidence="2" type="primary">gpn2</name>
    <name evidence="2" type="synonym">atpbd1b</name>
</gene>
<reference key="1">
    <citation type="submission" date="2005-03" db="EMBL/GenBank/DDBJ databases">
        <authorList>
            <consortium name="NIH - Xenopus Gene Collection (XGC) project"/>
        </authorList>
    </citation>
    <scope>NUCLEOTIDE SEQUENCE [LARGE SCALE MRNA]</scope>
    <source>
        <tissue>Embryo</tissue>
    </source>
</reference>
<keyword id="KW-0342">GTP-binding</keyword>
<keyword id="KW-0378">Hydrolase</keyword>
<keyword id="KW-0547">Nucleotide-binding</keyword>
<keyword id="KW-1185">Reference proteome</keyword>
<protein>
    <recommendedName>
        <fullName evidence="2">GPN-loop GTPase 2</fullName>
    </recommendedName>
    <alternativeName>
        <fullName evidence="2">ATP-binding domain 1 family member B</fullName>
    </alternativeName>
</protein>
<accession>Q5BJ53</accession>
<name>GPN2_XENTR</name>
<evidence type="ECO:0000250" key="1">
    <source>
        <dbReference type="UniProtKB" id="Q08726"/>
    </source>
</evidence>
<evidence type="ECO:0000250" key="2">
    <source>
        <dbReference type="UniProtKB" id="Q9H9Y4"/>
    </source>
</evidence>
<evidence type="ECO:0000250" key="3">
    <source>
        <dbReference type="UniProtKB" id="Q9UYR9"/>
    </source>
</evidence>
<evidence type="ECO:0000305" key="4"/>
<comment type="function">
    <text evidence="1">Small GTPase required for proper localization of RNA polymerase II and III (RNAPII and RNAPIII). May act at an RNAP assembly step prior to nuclear import.</text>
</comment>
<comment type="subunit">
    <text evidence="1 2">Heterodimers with gpn1 or gpn3. Binds to RNA polymerase II (RNAPII).</text>
</comment>
<comment type="similarity">
    <text evidence="4">Belongs to the GPN-loop GTPase family.</text>
</comment>
<dbReference type="EMBL" id="BC091618">
    <property type="protein sequence ID" value="AAH91618.1"/>
    <property type="molecule type" value="mRNA"/>
</dbReference>
<dbReference type="RefSeq" id="NP_001025645.1">
    <property type="nucleotide sequence ID" value="NM_001030474.1"/>
</dbReference>
<dbReference type="SMR" id="Q5BJ53"/>
<dbReference type="FunCoup" id="Q5BJ53">
    <property type="interactions" value="600"/>
</dbReference>
<dbReference type="STRING" id="8364.ENSXETP00000030357"/>
<dbReference type="PaxDb" id="8364-ENSXETP00000044714"/>
<dbReference type="DNASU" id="595033"/>
<dbReference type="GeneID" id="595033"/>
<dbReference type="KEGG" id="xtr:595033"/>
<dbReference type="AGR" id="Xenbase:XB-GENE-5751862"/>
<dbReference type="CTD" id="54707"/>
<dbReference type="Xenbase" id="XB-GENE-5751862">
    <property type="gene designation" value="gpn2"/>
</dbReference>
<dbReference type="eggNOG" id="KOG1533">
    <property type="taxonomic scope" value="Eukaryota"/>
</dbReference>
<dbReference type="HOGENOM" id="CLU_037460_0_2_1"/>
<dbReference type="InParanoid" id="Q5BJ53"/>
<dbReference type="OrthoDB" id="5839at2759"/>
<dbReference type="Proteomes" id="UP000008143">
    <property type="component" value="Chromosome 2"/>
</dbReference>
<dbReference type="Bgee" id="ENSXETG00000020692">
    <property type="expression patterns" value="Expressed in 4-cell stage embryo and 13 other cell types or tissues"/>
</dbReference>
<dbReference type="GO" id="GO:0005525">
    <property type="term" value="F:GTP binding"/>
    <property type="evidence" value="ECO:0007669"/>
    <property type="project" value="UniProtKB-KW"/>
</dbReference>
<dbReference type="GO" id="GO:0016787">
    <property type="term" value="F:hydrolase activity"/>
    <property type="evidence" value="ECO:0007669"/>
    <property type="project" value="UniProtKB-KW"/>
</dbReference>
<dbReference type="CDD" id="cd17871">
    <property type="entry name" value="GPN2"/>
    <property type="match status" value="1"/>
</dbReference>
<dbReference type="FunFam" id="3.40.50.300:FF:003889">
    <property type="entry name" value="GPN-loop GTPase 2"/>
    <property type="match status" value="1"/>
</dbReference>
<dbReference type="Gene3D" id="3.40.50.300">
    <property type="entry name" value="P-loop containing nucleotide triphosphate hydrolases"/>
    <property type="match status" value="1"/>
</dbReference>
<dbReference type="InterPro" id="IPR004130">
    <property type="entry name" value="Gpn"/>
</dbReference>
<dbReference type="InterPro" id="IPR030231">
    <property type="entry name" value="Gpn2"/>
</dbReference>
<dbReference type="InterPro" id="IPR027417">
    <property type="entry name" value="P-loop_NTPase"/>
</dbReference>
<dbReference type="PANTHER" id="PTHR21231:SF3">
    <property type="entry name" value="GPN-LOOP GTPASE 2"/>
    <property type="match status" value="1"/>
</dbReference>
<dbReference type="PANTHER" id="PTHR21231">
    <property type="entry name" value="XPA-BINDING PROTEIN 1-RELATED"/>
    <property type="match status" value="1"/>
</dbReference>
<dbReference type="Pfam" id="PF03029">
    <property type="entry name" value="ATP_bind_1"/>
    <property type="match status" value="1"/>
</dbReference>
<dbReference type="SUPFAM" id="SSF52540">
    <property type="entry name" value="P-loop containing nucleoside triphosphate hydrolases"/>
    <property type="match status" value="1"/>
</dbReference>